<evidence type="ECO:0000250" key="1">
    <source>
        <dbReference type="UniProtKB" id="P9WIE5"/>
    </source>
</evidence>
<evidence type="ECO:0000255" key="2">
    <source>
        <dbReference type="HAMAP-Rule" id="MF_01961"/>
    </source>
</evidence>
<evidence type="ECO:0000305" key="3"/>
<organism>
    <name type="scientific">Mycobacterium tuberculosis (strain CDC 1551 / Oshkosh)</name>
    <dbReference type="NCBI Taxonomy" id="83331"/>
    <lineage>
        <taxon>Bacteria</taxon>
        <taxon>Bacillati</taxon>
        <taxon>Actinomycetota</taxon>
        <taxon>Actinomycetes</taxon>
        <taxon>Mycobacteriales</taxon>
        <taxon>Mycobacteriaceae</taxon>
        <taxon>Mycobacterium</taxon>
        <taxon>Mycobacterium tuberculosis complex</taxon>
    </lineage>
</organism>
<proteinExistence type="inferred from homology"/>
<name>KATG_MYCTO</name>
<accession>P9WIE4</accession>
<accession>J9VFD2</accession>
<accession>O08221</accession>
<accession>Q08129</accession>
<accession>Q50544</accession>
<accession>Q50546</accession>
<accession>Q50551</accession>
<accession>Q50552</accession>
<accession>Q50553</accession>
<accession>Q50554</accession>
<accession>Q50555</accession>
<accession>Q50762</accession>
<accession>Q57215</accession>
<accession>Q57274</accession>
<comment type="function">
    <text evidence="1 2">Bifunctional enzyme with both catalase and broad-spectrum peroxidase activity, oxidizing various electron donors including NADP(H). Protects M.tuberculosis against toxic reactive oxygen species (ROS) including hydrogen peroxide as well as organic peroxides and thus contributes to its survival within host macrophages by countering the phagocyte oxidative burst. Also displays efficient peroxynitritase activity, which may help the bacterium to persist in macrophages.</text>
</comment>
<comment type="function">
    <text evidence="1">Catalyzes the oxidative activation of the antitubercular pro-drug isoniazid (INH) to generate an isonicotinoyl radical that then reacts nonenzymatically with NAD to form an isonicotinoyl-NAD adduct which inhibits InhA.</text>
</comment>
<comment type="catalytic activity">
    <reaction evidence="2">
        <text>H2O2 + AH2 = A + 2 H2O</text>
        <dbReference type="Rhea" id="RHEA:30275"/>
        <dbReference type="ChEBI" id="CHEBI:13193"/>
        <dbReference type="ChEBI" id="CHEBI:15377"/>
        <dbReference type="ChEBI" id="CHEBI:16240"/>
        <dbReference type="ChEBI" id="CHEBI:17499"/>
        <dbReference type="EC" id="1.11.1.21"/>
    </reaction>
</comment>
<comment type="catalytic activity">
    <reaction evidence="2">
        <text>2 H2O2 = O2 + 2 H2O</text>
        <dbReference type="Rhea" id="RHEA:20309"/>
        <dbReference type="ChEBI" id="CHEBI:15377"/>
        <dbReference type="ChEBI" id="CHEBI:15379"/>
        <dbReference type="ChEBI" id="CHEBI:16240"/>
        <dbReference type="EC" id="1.11.1.21"/>
    </reaction>
</comment>
<comment type="cofactor">
    <cofactor evidence="2">
        <name>heme b</name>
        <dbReference type="ChEBI" id="CHEBI:60344"/>
    </cofactor>
    <text evidence="2">Binds 1 heme b (iron(II)-protoporphyrin IX) group per subunit.</text>
</comment>
<comment type="subunit">
    <text evidence="1">Homodimer.</text>
</comment>
<comment type="PTM">
    <text evidence="2">Formation of the three residue Trp-Tyr-Met cross-link is important for the catalase, but not the peroxidase activity of the enzyme.</text>
</comment>
<comment type="miscellaneous">
    <text evidence="1 3">Many isoniazid-resistant clinical isolates contain mutations in katG, leading to abolition or reduction of catalase/peroxidase activity which results in lack of INH activation, or to a reduced affinity for INH. Other mechanisms of INH resistance include deletion of the katG gene, and down-regulation of katG expression due to mutations in the furA-katG intergenic region.</text>
</comment>
<comment type="similarity">
    <text evidence="2">Belongs to the peroxidase family. Peroxidase/catalase subfamily.</text>
</comment>
<sequence length="740" mass="80605">MPEQHPPITETTTGAASNGCPVVGHMKYPVEGGGNQDWWPNRLNLKVLHQNPAVADPMGAAFDYAAEVATIDVDALTRDIEEVMTTSQPWWPADYGHYGPLFIRMAWHAAGTYRIHDGRGGAGGGMQRFAPLNSWPDNASLDKARRLLWPVKKKYGKKLSWADLIVFAGNCALESMGFKTFGFGFGRVDQWEPDEVYWGKEATWLGDERYSGKRDLENPLAAVQMGLIYVNPEGPNGNPDPMAAAVDIRETFRRMAMNDVETAALIVGGHTFGKTHGAGPADLVGPEPEAAPLEQMGLGWKSSYGTGTGKDAITSGIEVVWTNTPTKWDNSFLEILYGYEWELTKSPAGAWQYTAKDGAGAGTIPDPFGGPGRSPTMLATDLSLRVDPIYERITRRWLEHPEELADEFAKAWYKLIHRDMGPVARYLGPLVPKQTLLWQDPVPAVSHDLVGEAEIASLKSQIRASGLTVSQLVSTAWAAASSFRGSDKRGGANGGRIRLQPQVGWEVNDPDGDLRKVIRTLEEIQESFNSAAPGNIKVSFADLVVLGGCAAIEKAAKAAGHNITVPFTPGRTDASQEQTDVESFAVLEPKADGFRNYLGKGNPLPAEYMLLDKANLLTLSAPEMTVLVGGLRVLGANYKRLPLGVFTEASESLTNDFFVNLLDMGITWEPSPADDGTYQGKDGSGKVKWTGSRVDLVFGSNSELRALVEVYGADDAQPKFVQDFVAAWDKVMNLDRFDVR</sequence>
<reference key="1">
    <citation type="journal article" date="2002" name="J. Bacteriol.">
        <title>Whole-genome comparison of Mycobacterium tuberculosis clinical and laboratory strains.</title>
        <authorList>
            <person name="Fleischmann R.D."/>
            <person name="Alland D."/>
            <person name="Eisen J.A."/>
            <person name="Carpenter L."/>
            <person name="White O."/>
            <person name="Peterson J.D."/>
            <person name="DeBoy R.T."/>
            <person name="Dodson R.J."/>
            <person name="Gwinn M.L."/>
            <person name="Haft D.H."/>
            <person name="Hickey E.K."/>
            <person name="Kolonay J.F."/>
            <person name="Nelson W.C."/>
            <person name="Umayam L.A."/>
            <person name="Ermolaeva M.D."/>
            <person name="Salzberg S.L."/>
            <person name="Delcher A."/>
            <person name="Utterback T.R."/>
            <person name="Weidman J.F."/>
            <person name="Khouri H.M."/>
            <person name="Gill J."/>
            <person name="Mikula A."/>
            <person name="Bishai W."/>
            <person name="Jacobs W.R. Jr."/>
            <person name="Venter J.C."/>
            <person name="Fraser C.M."/>
        </authorList>
    </citation>
    <scope>NUCLEOTIDE SEQUENCE [LARGE SCALE GENOMIC DNA]</scope>
    <source>
        <strain>CDC 1551 / Oshkosh</strain>
    </source>
</reference>
<protein>
    <recommendedName>
        <fullName evidence="2">Catalase-peroxidase</fullName>
        <shortName evidence="2">CP</shortName>
        <ecNumber evidence="2">1.11.1.21</ecNumber>
    </recommendedName>
    <alternativeName>
        <fullName evidence="2">Peroxidase/catalase</fullName>
    </alternativeName>
</protein>
<dbReference type="EC" id="1.11.1.21" evidence="2"/>
<dbReference type="EMBL" id="AE000516">
    <property type="protein sequence ID" value="AAK46231.1"/>
    <property type="molecule type" value="Genomic_DNA"/>
</dbReference>
<dbReference type="PIR" id="A70519">
    <property type="entry name" value="A40662"/>
</dbReference>
<dbReference type="RefSeq" id="WP_003899075.1">
    <property type="nucleotide sequence ID" value="NZ_KK341227.1"/>
</dbReference>
<dbReference type="SMR" id="P9WIE4"/>
<dbReference type="DrugCentral" id="P9WIE4"/>
<dbReference type="KEGG" id="mtc:MT1959"/>
<dbReference type="PATRIC" id="fig|83331.31.peg.2109"/>
<dbReference type="HOGENOM" id="CLU_025424_2_0_11"/>
<dbReference type="Proteomes" id="UP000001020">
    <property type="component" value="Chromosome"/>
</dbReference>
<dbReference type="GO" id="GO:0005829">
    <property type="term" value="C:cytosol"/>
    <property type="evidence" value="ECO:0007669"/>
    <property type="project" value="TreeGrafter"/>
</dbReference>
<dbReference type="GO" id="GO:0004096">
    <property type="term" value="F:catalase activity"/>
    <property type="evidence" value="ECO:0007669"/>
    <property type="project" value="UniProtKB-UniRule"/>
</dbReference>
<dbReference type="GO" id="GO:0020037">
    <property type="term" value="F:heme binding"/>
    <property type="evidence" value="ECO:0007669"/>
    <property type="project" value="InterPro"/>
</dbReference>
<dbReference type="GO" id="GO:0046872">
    <property type="term" value="F:metal ion binding"/>
    <property type="evidence" value="ECO:0007669"/>
    <property type="project" value="UniProtKB-KW"/>
</dbReference>
<dbReference type="GO" id="GO:0070301">
    <property type="term" value="P:cellular response to hydrogen peroxide"/>
    <property type="evidence" value="ECO:0007669"/>
    <property type="project" value="TreeGrafter"/>
</dbReference>
<dbReference type="GO" id="GO:0042744">
    <property type="term" value="P:hydrogen peroxide catabolic process"/>
    <property type="evidence" value="ECO:0007669"/>
    <property type="project" value="UniProtKB-KW"/>
</dbReference>
<dbReference type="GO" id="GO:0046677">
    <property type="term" value="P:response to antibiotic"/>
    <property type="evidence" value="ECO:0007669"/>
    <property type="project" value="UniProtKB-KW"/>
</dbReference>
<dbReference type="CDD" id="cd00649">
    <property type="entry name" value="catalase_peroxidase_1"/>
    <property type="match status" value="1"/>
</dbReference>
<dbReference type="CDD" id="cd08200">
    <property type="entry name" value="catalase_peroxidase_2"/>
    <property type="match status" value="1"/>
</dbReference>
<dbReference type="FunFam" id="1.10.420.10:FF:000002">
    <property type="entry name" value="Catalase-peroxidase"/>
    <property type="match status" value="1"/>
</dbReference>
<dbReference type="FunFam" id="1.10.420.10:FF:000004">
    <property type="entry name" value="Catalase-peroxidase"/>
    <property type="match status" value="1"/>
</dbReference>
<dbReference type="FunFam" id="1.10.520.10:FF:000002">
    <property type="entry name" value="Catalase-peroxidase"/>
    <property type="match status" value="1"/>
</dbReference>
<dbReference type="Gene3D" id="1.10.520.10">
    <property type="match status" value="2"/>
</dbReference>
<dbReference type="Gene3D" id="1.10.420.10">
    <property type="entry name" value="Peroxidase, domain 2"/>
    <property type="match status" value="2"/>
</dbReference>
<dbReference type="HAMAP" id="MF_01961">
    <property type="entry name" value="Catal_peroxid"/>
    <property type="match status" value="1"/>
</dbReference>
<dbReference type="InterPro" id="IPR000763">
    <property type="entry name" value="Catalase_peroxidase"/>
</dbReference>
<dbReference type="InterPro" id="IPR002016">
    <property type="entry name" value="Haem_peroxidase"/>
</dbReference>
<dbReference type="InterPro" id="IPR010255">
    <property type="entry name" value="Haem_peroxidase_sf"/>
</dbReference>
<dbReference type="InterPro" id="IPR019794">
    <property type="entry name" value="Peroxidases_AS"/>
</dbReference>
<dbReference type="InterPro" id="IPR019793">
    <property type="entry name" value="Peroxidases_heam-ligand_BS"/>
</dbReference>
<dbReference type="NCBIfam" id="TIGR00198">
    <property type="entry name" value="cat_per_HPI"/>
    <property type="match status" value="1"/>
</dbReference>
<dbReference type="NCBIfam" id="NF011635">
    <property type="entry name" value="PRK15061.1"/>
    <property type="match status" value="1"/>
</dbReference>
<dbReference type="PANTHER" id="PTHR30555:SF0">
    <property type="entry name" value="CATALASE-PEROXIDASE"/>
    <property type="match status" value="1"/>
</dbReference>
<dbReference type="PANTHER" id="PTHR30555">
    <property type="entry name" value="HYDROPEROXIDASE I, BIFUNCTIONAL CATALASE-PEROXIDASE"/>
    <property type="match status" value="1"/>
</dbReference>
<dbReference type="Pfam" id="PF00141">
    <property type="entry name" value="peroxidase"/>
    <property type="match status" value="2"/>
</dbReference>
<dbReference type="PRINTS" id="PR00460">
    <property type="entry name" value="BPEROXIDASE"/>
</dbReference>
<dbReference type="PRINTS" id="PR00458">
    <property type="entry name" value="PEROXIDASE"/>
</dbReference>
<dbReference type="SUPFAM" id="SSF48113">
    <property type="entry name" value="Heme-dependent peroxidases"/>
    <property type="match status" value="2"/>
</dbReference>
<dbReference type="PROSITE" id="PS00435">
    <property type="entry name" value="PEROXIDASE_1"/>
    <property type="match status" value="1"/>
</dbReference>
<dbReference type="PROSITE" id="PS00436">
    <property type="entry name" value="PEROXIDASE_2"/>
    <property type="match status" value="1"/>
</dbReference>
<dbReference type="PROSITE" id="PS50873">
    <property type="entry name" value="PEROXIDASE_4"/>
    <property type="match status" value="1"/>
</dbReference>
<feature type="chain" id="PRO_0000428021" description="Catalase-peroxidase">
    <location>
        <begin position="1"/>
        <end position="740"/>
    </location>
</feature>
<feature type="active site" description="Proton acceptor" evidence="2">
    <location>
        <position position="108"/>
    </location>
</feature>
<feature type="active site" description="Tryptophan radical intermediate" evidence="1">
    <location>
        <position position="321"/>
    </location>
</feature>
<feature type="binding site" description="axial binding residue" evidence="2">
    <location>
        <position position="270"/>
    </location>
    <ligand>
        <name>heme b</name>
        <dbReference type="ChEBI" id="CHEBI:60344"/>
    </ligand>
    <ligandPart>
        <name>Fe</name>
        <dbReference type="ChEBI" id="CHEBI:18248"/>
    </ligandPart>
</feature>
<feature type="site" description="Transition state stabilizer" evidence="2">
    <location>
        <position position="104"/>
    </location>
</feature>
<feature type="cross-link" description="Tryptophyl-tyrosyl-methioninium (Trp-Tyr) (with M-255)" evidence="2">
    <location>
        <begin position="107"/>
        <end position="229"/>
    </location>
</feature>
<feature type="cross-link" description="Tryptophyl-tyrosyl-methioninium (Tyr-Met) (with W-107)" evidence="2">
    <location>
        <begin position="229"/>
        <end position="255"/>
    </location>
</feature>
<gene>
    <name evidence="2" type="primary">katG</name>
    <name type="ordered locus">MT1959</name>
</gene>
<keyword id="KW-0046">Antibiotic resistance</keyword>
<keyword id="KW-0349">Heme</keyword>
<keyword id="KW-0376">Hydrogen peroxide</keyword>
<keyword id="KW-0408">Iron</keyword>
<keyword id="KW-0479">Metal-binding</keyword>
<keyword id="KW-0556">Organic radical</keyword>
<keyword id="KW-0560">Oxidoreductase</keyword>
<keyword id="KW-0575">Peroxidase</keyword>
<keyword id="KW-1185">Reference proteome</keyword>
<keyword id="KW-0843">Virulence</keyword>